<protein>
    <recommendedName>
        <fullName evidence="1">Large ribosomal subunit protein bL31B</fullName>
    </recommendedName>
    <alternativeName>
        <fullName evidence="2">50S ribosomal protein L31 type B</fullName>
    </alternativeName>
</protein>
<proteinExistence type="inferred from homology"/>
<organism>
    <name type="scientific">Streptococcus uberis (strain ATCC BAA-854 / 0140J)</name>
    <dbReference type="NCBI Taxonomy" id="218495"/>
    <lineage>
        <taxon>Bacteria</taxon>
        <taxon>Bacillati</taxon>
        <taxon>Bacillota</taxon>
        <taxon>Bacilli</taxon>
        <taxon>Lactobacillales</taxon>
        <taxon>Streptococcaceae</taxon>
        <taxon>Streptococcus</taxon>
    </lineage>
</organism>
<comment type="subunit">
    <text evidence="1">Part of the 50S ribosomal subunit.</text>
</comment>
<comment type="similarity">
    <text evidence="1">Belongs to the bacterial ribosomal protein bL31 family. Type B subfamily.</text>
</comment>
<reference key="1">
    <citation type="journal article" date="2009" name="BMC Genomics">
        <title>Evidence for niche adaptation in the genome of the bovine pathogen Streptococcus uberis.</title>
        <authorList>
            <person name="Ward P.N."/>
            <person name="Holden M.T.G."/>
            <person name="Leigh J.A."/>
            <person name="Lennard N."/>
            <person name="Bignell A."/>
            <person name="Barron A."/>
            <person name="Clark L."/>
            <person name="Quail M.A."/>
            <person name="Woodward J."/>
            <person name="Barrell B.G."/>
            <person name="Egan S.A."/>
            <person name="Field T.R."/>
            <person name="Maskell D."/>
            <person name="Kehoe M."/>
            <person name="Dowson C.G."/>
            <person name="Chanter N."/>
            <person name="Whatmore A.M."/>
            <person name="Bentley S.D."/>
            <person name="Parkhill J."/>
        </authorList>
    </citation>
    <scope>NUCLEOTIDE SEQUENCE [LARGE SCALE GENOMIC DNA]</scope>
    <source>
        <strain>ATCC BAA-854 / 0140J</strain>
    </source>
</reference>
<keyword id="KW-1185">Reference proteome</keyword>
<keyword id="KW-0687">Ribonucleoprotein</keyword>
<keyword id="KW-0689">Ribosomal protein</keyword>
<accession>B9DRQ0</accession>
<name>RL31B_STRU0</name>
<sequence>MRKDIHPDYRPVVFLDTTTGYKFLSGSTKSSKETIEFEGETYPLIRVEISSDSHPFYTGRQKFTQADGRVDRFNKKYGLKDANAAK</sequence>
<gene>
    <name evidence="1" type="primary">rpmE2</name>
    <name type="ordered locus">SUB0635</name>
</gene>
<evidence type="ECO:0000255" key="1">
    <source>
        <dbReference type="HAMAP-Rule" id="MF_00502"/>
    </source>
</evidence>
<evidence type="ECO:0000305" key="2"/>
<dbReference type="EMBL" id="AM946015">
    <property type="protein sequence ID" value="CAR41479.1"/>
    <property type="molecule type" value="Genomic_DNA"/>
</dbReference>
<dbReference type="RefSeq" id="WP_012658156.1">
    <property type="nucleotide sequence ID" value="NC_012004.1"/>
</dbReference>
<dbReference type="SMR" id="B9DRQ0"/>
<dbReference type="STRING" id="218495.SUB0635"/>
<dbReference type="KEGG" id="sub:SUB0635"/>
<dbReference type="eggNOG" id="COG0254">
    <property type="taxonomic scope" value="Bacteria"/>
</dbReference>
<dbReference type="HOGENOM" id="CLU_114306_2_1_9"/>
<dbReference type="OrthoDB" id="9803251at2"/>
<dbReference type="Proteomes" id="UP000000449">
    <property type="component" value="Chromosome"/>
</dbReference>
<dbReference type="GO" id="GO:1990904">
    <property type="term" value="C:ribonucleoprotein complex"/>
    <property type="evidence" value="ECO:0007669"/>
    <property type="project" value="UniProtKB-KW"/>
</dbReference>
<dbReference type="GO" id="GO:0005840">
    <property type="term" value="C:ribosome"/>
    <property type="evidence" value="ECO:0007669"/>
    <property type="project" value="UniProtKB-KW"/>
</dbReference>
<dbReference type="GO" id="GO:0003735">
    <property type="term" value="F:structural constituent of ribosome"/>
    <property type="evidence" value="ECO:0007669"/>
    <property type="project" value="InterPro"/>
</dbReference>
<dbReference type="GO" id="GO:0006412">
    <property type="term" value="P:translation"/>
    <property type="evidence" value="ECO:0007669"/>
    <property type="project" value="UniProtKB-UniRule"/>
</dbReference>
<dbReference type="Gene3D" id="4.10.830.30">
    <property type="entry name" value="Ribosomal protein L31"/>
    <property type="match status" value="1"/>
</dbReference>
<dbReference type="HAMAP" id="MF_00502">
    <property type="entry name" value="Ribosomal_bL31_2"/>
    <property type="match status" value="1"/>
</dbReference>
<dbReference type="InterPro" id="IPR034704">
    <property type="entry name" value="Ribosomal_bL28/bL31-like_sf"/>
</dbReference>
<dbReference type="InterPro" id="IPR002150">
    <property type="entry name" value="Ribosomal_bL31"/>
</dbReference>
<dbReference type="InterPro" id="IPR027493">
    <property type="entry name" value="Ribosomal_bL31_B"/>
</dbReference>
<dbReference type="InterPro" id="IPR042105">
    <property type="entry name" value="Ribosomal_bL31_sf"/>
</dbReference>
<dbReference type="NCBIfam" id="TIGR00105">
    <property type="entry name" value="L31"/>
    <property type="match status" value="1"/>
</dbReference>
<dbReference type="NCBIfam" id="NF002462">
    <property type="entry name" value="PRK01678.1"/>
    <property type="match status" value="1"/>
</dbReference>
<dbReference type="PANTHER" id="PTHR33280">
    <property type="entry name" value="50S RIBOSOMAL PROTEIN L31, CHLOROPLASTIC"/>
    <property type="match status" value="1"/>
</dbReference>
<dbReference type="PANTHER" id="PTHR33280:SF1">
    <property type="entry name" value="LARGE RIBOSOMAL SUBUNIT PROTEIN BL31C"/>
    <property type="match status" value="1"/>
</dbReference>
<dbReference type="Pfam" id="PF01197">
    <property type="entry name" value="Ribosomal_L31"/>
    <property type="match status" value="1"/>
</dbReference>
<dbReference type="PRINTS" id="PR01249">
    <property type="entry name" value="RIBOSOMALL31"/>
</dbReference>
<dbReference type="SUPFAM" id="SSF143800">
    <property type="entry name" value="L28p-like"/>
    <property type="match status" value="1"/>
</dbReference>
<dbReference type="PROSITE" id="PS01143">
    <property type="entry name" value="RIBOSOMAL_L31"/>
    <property type="match status" value="1"/>
</dbReference>
<feature type="chain" id="PRO_1000176996" description="Large ribosomal subunit protein bL31B">
    <location>
        <begin position="1"/>
        <end position="86"/>
    </location>
</feature>